<name>RNZ_LACAC</name>
<accession>Q5FKH3</accession>
<protein>
    <recommendedName>
        <fullName evidence="1">Ribonuclease Z</fullName>
        <shortName evidence="1">RNase Z</shortName>
        <ecNumber evidence="1">3.1.26.11</ecNumber>
    </recommendedName>
    <alternativeName>
        <fullName evidence="1">tRNA 3 endonuclease</fullName>
    </alternativeName>
    <alternativeName>
        <fullName evidence="1">tRNase Z</fullName>
    </alternativeName>
</protein>
<evidence type="ECO:0000255" key="1">
    <source>
        <dbReference type="HAMAP-Rule" id="MF_01818"/>
    </source>
</evidence>
<proteinExistence type="inferred from homology"/>
<keyword id="KW-0255">Endonuclease</keyword>
<keyword id="KW-0378">Hydrolase</keyword>
<keyword id="KW-0479">Metal-binding</keyword>
<keyword id="KW-0540">Nuclease</keyword>
<keyword id="KW-1185">Reference proteome</keyword>
<keyword id="KW-0819">tRNA processing</keyword>
<keyword id="KW-0862">Zinc</keyword>
<feature type="chain" id="PRO_0000155869" description="Ribonuclease Z">
    <location>
        <begin position="1"/>
        <end position="312"/>
    </location>
</feature>
<feature type="active site" description="Proton acceptor" evidence="1">
    <location>
        <position position="67"/>
    </location>
</feature>
<feature type="binding site" evidence="1">
    <location>
        <position position="63"/>
    </location>
    <ligand>
        <name>Zn(2+)</name>
        <dbReference type="ChEBI" id="CHEBI:29105"/>
        <label>1</label>
        <note>catalytic</note>
    </ligand>
</feature>
<feature type="binding site" evidence="1">
    <location>
        <position position="65"/>
    </location>
    <ligand>
        <name>Zn(2+)</name>
        <dbReference type="ChEBI" id="CHEBI:29105"/>
        <label>1</label>
        <note>catalytic</note>
    </ligand>
</feature>
<feature type="binding site" evidence="1">
    <location>
        <position position="67"/>
    </location>
    <ligand>
        <name>Zn(2+)</name>
        <dbReference type="ChEBI" id="CHEBI:29105"/>
        <label>2</label>
        <note>catalytic</note>
    </ligand>
</feature>
<feature type="binding site" evidence="1">
    <location>
        <position position="68"/>
    </location>
    <ligand>
        <name>Zn(2+)</name>
        <dbReference type="ChEBI" id="CHEBI:29105"/>
        <label>2</label>
        <note>catalytic</note>
    </ligand>
</feature>
<feature type="binding site" evidence="1">
    <location>
        <position position="141"/>
    </location>
    <ligand>
        <name>Zn(2+)</name>
        <dbReference type="ChEBI" id="CHEBI:29105"/>
        <label>1</label>
        <note>catalytic</note>
    </ligand>
</feature>
<feature type="binding site" evidence="1">
    <location>
        <position position="212"/>
    </location>
    <ligand>
        <name>Zn(2+)</name>
        <dbReference type="ChEBI" id="CHEBI:29105"/>
        <label>1</label>
        <note>catalytic</note>
    </ligand>
</feature>
<feature type="binding site" evidence="1">
    <location>
        <position position="212"/>
    </location>
    <ligand>
        <name>Zn(2+)</name>
        <dbReference type="ChEBI" id="CHEBI:29105"/>
        <label>2</label>
        <note>catalytic</note>
    </ligand>
</feature>
<feature type="binding site" evidence="1">
    <location>
        <position position="270"/>
    </location>
    <ligand>
        <name>Zn(2+)</name>
        <dbReference type="ChEBI" id="CHEBI:29105"/>
        <label>2</label>
        <note>catalytic</note>
    </ligand>
</feature>
<reference key="1">
    <citation type="journal article" date="2005" name="Proc. Natl. Acad. Sci. U.S.A.">
        <title>Complete genome sequence of the probiotic lactic acid bacterium Lactobacillus acidophilus NCFM.</title>
        <authorList>
            <person name="Altermann E."/>
            <person name="Russell W.M."/>
            <person name="Azcarate-Peril M.A."/>
            <person name="Barrangou R."/>
            <person name="Buck B.L."/>
            <person name="McAuliffe O."/>
            <person name="Souther N."/>
            <person name="Dobson A."/>
            <person name="Duong T."/>
            <person name="Callanan M."/>
            <person name="Lick S."/>
            <person name="Hamrick A."/>
            <person name="Cano R."/>
            <person name="Klaenhammer T.R."/>
        </authorList>
    </citation>
    <scope>NUCLEOTIDE SEQUENCE [LARGE SCALE GENOMIC DNA]</scope>
    <source>
        <strain>ATCC 700396 / NCK56 / N2 / NCFM</strain>
    </source>
</reference>
<gene>
    <name evidence="1" type="primary">rnz</name>
    <name type="ordered locus">LBA0949</name>
</gene>
<organism>
    <name type="scientific">Lactobacillus acidophilus (strain ATCC 700396 / NCK56 / N2 / NCFM)</name>
    <dbReference type="NCBI Taxonomy" id="272621"/>
    <lineage>
        <taxon>Bacteria</taxon>
        <taxon>Bacillati</taxon>
        <taxon>Bacillota</taxon>
        <taxon>Bacilli</taxon>
        <taxon>Lactobacillales</taxon>
        <taxon>Lactobacillaceae</taxon>
        <taxon>Lactobacillus</taxon>
    </lineage>
</organism>
<sequence>MELQFLGTGAGQPSKQRNVSSVALKLLDELNEIWLFDVGEATQHQILRTNIRLRKVTKIFISHNHGDHIFGLPGLLSTRSFQGDVGPLTIYGPAGIEDFVKISLKVSRTKISYPIHYVELSEPGLICEDRGFKVYTDRLDHRIPSFGFRVVEDSHPGELLIDKLAEYNIPNGPILGKLKNGEQVALADGTILDGKDFLGPEKPGRIITIIYDTRSTSSIAHLAKDADVLVHESTFAGDESKMAHNYYHSTSVQAAKIARQENVKQLCLNHISARYMGAKAKKLENQAKKVFPNTILVNDFDRVNIPMKGSKK</sequence>
<dbReference type="EC" id="3.1.26.11" evidence="1"/>
<dbReference type="EMBL" id="CP000033">
    <property type="protein sequence ID" value="AAV42801.1"/>
    <property type="molecule type" value="Genomic_DNA"/>
</dbReference>
<dbReference type="RefSeq" id="WP_003547055.1">
    <property type="nucleotide sequence ID" value="NC_006814.3"/>
</dbReference>
<dbReference type="RefSeq" id="YP_193832.1">
    <property type="nucleotide sequence ID" value="NC_006814.3"/>
</dbReference>
<dbReference type="SMR" id="Q5FKH3"/>
<dbReference type="STRING" id="272621.LBA0949"/>
<dbReference type="GeneID" id="93289936"/>
<dbReference type="KEGG" id="lac:LBA0949"/>
<dbReference type="PATRIC" id="fig|272621.13.peg.901"/>
<dbReference type="eggNOG" id="COG1234">
    <property type="taxonomic scope" value="Bacteria"/>
</dbReference>
<dbReference type="HOGENOM" id="CLU_031317_2_0_9"/>
<dbReference type="OrthoDB" id="9800940at2"/>
<dbReference type="BioCyc" id="LACI272621:G1G49-951-MONOMER"/>
<dbReference type="Proteomes" id="UP000006381">
    <property type="component" value="Chromosome"/>
</dbReference>
<dbReference type="GO" id="GO:0042781">
    <property type="term" value="F:3'-tRNA processing endoribonuclease activity"/>
    <property type="evidence" value="ECO:0007669"/>
    <property type="project" value="UniProtKB-UniRule"/>
</dbReference>
<dbReference type="GO" id="GO:0008270">
    <property type="term" value="F:zinc ion binding"/>
    <property type="evidence" value="ECO:0007669"/>
    <property type="project" value="UniProtKB-UniRule"/>
</dbReference>
<dbReference type="CDD" id="cd07717">
    <property type="entry name" value="RNaseZ_ZiPD-like_MBL-fold"/>
    <property type="match status" value="1"/>
</dbReference>
<dbReference type="FunFam" id="3.60.15.10:FF:000002">
    <property type="entry name" value="Ribonuclease Z"/>
    <property type="match status" value="1"/>
</dbReference>
<dbReference type="Gene3D" id="3.60.15.10">
    <property type="entry name" value="Ribonuclease Z/Hydroxyacylglutathione hydrolase-like"/>
    <property type="match status" value="1"/>
</dbReference>
<dbReference type="HAMAP" id="MF_01818">
    <property type="entry name" value="RNase_Z_BN"/>
    <property type="match status" value="1"/>
</dbReference>
<dbReference type="InterPro" id="IPR001279">
    <property type="entry name" value="Metallo-B-lactamas"/>
</dbReference>
<dbReference type="InterPro" id="IPR036866">
    <property type="entry name" value="RibonucZ/Hydroxyglut_hydro"/>
</dbReference>
<dbReference type="InterPro" id="IPR013471">
    <property type="entry name" value="RNase_Z/BN"/>
</dbReference>
<dbReference type="NCBIfam" id="NF000801">
    <property type="entry name" value="PRK00055.1-3"/>
    <property type="match status" value="1"/>
</dbReference>
<dbReference type="NCBIfam" id="TIGR02651">
    <property type="entry name" value="RNase_Z"/>
    <property type="match status" value="1"/>
</dbReference>
<dbReference type="PANTHER" id="PTHR46018">
    <property type="entry name" value="ZINC PHOSPHODIESTERASE ELAC PROTEIN 1"/>
    <property type="match status" value="1"/>
</dbReference>
<dbReference type="PANTHER" id="PTHR46018:SF2">
    <property type="entry name" value="ZINC PHOSPHODIESTERASE ELAC PROTEIN 1"/>
    <property type="match status" value="1"/>
</dbReference>
<dbReference type="Pfam" id="PF00753">
    <property type="entry name" value="Lactamase_B"/>
    <property type="match status" value="1"/>
</dbReference>
<dbReference type="SUPFAM" id="SSF56281">
    <property type="entry name" value="Metallo-hydrolase/oxidoreductase"/>
    <property type="match status" value="1"/>
</dbReference>
<comment type="function">
    <text evidence="1">Zinc phosphodiesterase, which displays some tRNA 3'-processing endonuclease activity. Probably involved in tRNA maturation, by removing a 3'-trailer from precursor tRNA.</text>
</comment>
<comment type="catalytic activity">
    <reaction evidence="1">
        <text>Endonucleolytic cleavage of RNA, removing extra 3' nucleotides from tRNA precursor, generating 3' termini of tRNAs. A 3'-hydroxy group is left at the tRNA terminus and a 5'-phosphoryl group is left at the trailer molecule.</text>
        <dbReference type="EC" id="3.1.26.11"/>
    </reaction>
</comment>
<comment type="cofactor">
    <cofactor evidence="1">
        <name>Zn(2+)</name>
        <dbReference type="ChEBI" id="CHEBI:29105"/>
    </cofactor>
    <text evidence="1">Binds 2 Zn(2+) ions.</text>
</comment>
<comment type="subunit">
    <text evidence="1">Homodimer.</text>
</comment>
<comment type="similarity">
    <text evidence="1">Belongs to the RNase Z family.</text>
</comment>